<evidence type="ECO:0000255" key="1">
    <source>
        <dbReference type="HAMAP-Rule" id="MF_01556"/>
    </source>
</evidence>
<evidence type="ECO:0000305" key="2"/>
<sequence length="171" mass="18926">MKIAIGCDHIVTNEKMAVSDFLKSKGYDVIDCGTYDHTRTHYPIFGKKVGEAVVNGQADLGVCICGTGVGINNAVNKVPGIRSALVRDMTTALYAKEELNANVIGFGGKITGELLMCDIIDAFIKAEYKETEENKKLIAKIAHLESHHANQEDPDFFTEFLEKWDRGEYHD</sequence>
<protein>
    <recommendedName>
        <fullName evidence="1">Galactose-6-phosphate isomerase subunit LacB 1</fullName>
        <ecNumber evidence="1">5.3.1.26</ecNumber>
    </recommendedName>
</protein>
<comment type="catalytic activity">
    <reaction evidence="1">
        <text>aldehydo-D-galactose 6-phosphate = keto-D-tagatose 6-phosphate</text>
        <dbReference type="Rhea" id="RHEA:13033"/>
        <dbReference type="ChEBI" id="CHEBI:58255"/>
        <dbReference type="ChEBI" id="CHEBI:134283"/>
        <dbReference type="EC" id="5.3.1.26"/>
    </reaction>
</comment>
<comment type="pathway">
    <text evidence="1">Carbohydrate metabolism; D-galactose 6-phosphate degradation; D-tagatose 6-phosphate from D-galactose 6-phosphate: step 1/1.</text>
</comment>
<comment type="subunit">
    <text evidence="1">Heteromultimeric protein consisting of LacA and LacB.</text>
</comment>
<comment type="similarity">
    <text evidence="1">Belongs to the LacAB/RpiB family.</text>
</comment>
<comment type="sequence caution" evidence="2">
    <conflict type="erroneous initiation">
        <sequence resource="EMBL-CDS" id="AAT87581"/>
    </conflict>
</comment>
<feature type="chain" id="PRO_0000208161" description="Galactose-6-phosphate isomerase subunit LacB 1">
    <location>
        <begin position="1"/>
        <end position="171"/>
    </location>
</feature>
<reference key="1">
    <citation type="journal article" date="2004" name="J. Infect. Dis.">
        <title>Progress toward characterization of the group A Streptococcus metagenome: complete genome sequence of a macrolide-resistant serotype M6 strain.</title>
        <authorList>
            <person name="Banks D.J."/>
            <person name="Porcella S.F."/>
            <person name="Barbian K.D."/>
            <person name="Beres S.B."/>
            <person name="Philips L.E."/>
            <person name="Voyich J.M."/>
            <person name="DeLeo F.R."/>
            <person name="Martin J.M."/>
            <person name="Somerville G.A."/>
            <person name="Musser J.M."/>
        </authorList>
    </citation>
    <scope>NUCLEOTIDE SEQUENCE [LARGE SCALE GENOMIC DNA]</scope>
    <source>
        <strain>ATCC BAA-946 / MGAS10394</strain>
    </source>
</reference>
<accession>Q5XAI2</accession>
<organism>
    <name type="scientific">Streptococcus pyogenes serotype M6 (strain ATCC BAA-946 / MGAS10394)</name>
    <dbReference type="NCBI Taxonomy" id="286636"/>
    <lineage>
        <taxon>Bacteria</taxon>
        <taxon>Bacillati</taxon>
        <taxon>Bacillota</taxon>
        <taxon>Bacilli</taxon>
        <taxon>Lactobacillales</taxon>
        <taxon>Streptococcaceae</taxon>
        <taxon>Streptococcus</taxon>
    </lineage>
</organism>
<dbReference type="EC" id="5.3.1.26" evidence="1"/>
<dbReference type="EMBL" id="CP000003">
    <property type="protein sequence ID" value="AAT87581.1"/>
    <property type="status" value="ALT_INIT"/>
    <property type="molecule type" value="Genomic_DNA"/>
</dbReference>
<dbReference type="SMR" id="Q5XAI2"/>
<dbReference type="KEGG" id="spa:M6_Spy1446"/>
<dbReference type="HOGENOM" id="CLU_091396_2_0_9"/>
<dbReference type="UniPathway" id="UPA00702">
    <property type="reaction ID" value="UER00714"/>
</dbReference>
<dbReference type="Proteomes" id="UP000001167">
    <property type="component" value="Chromosome"/>
</dbReference>
<dbReference type="GO" id="GO:0050044">
    <property type="term" value="F:galactose-6-phosphate isomerase activity"/>
    <property type="evidence" value="ECO:0007669"/>
    <property type="project" value="UniProtKB-UniRule"/>
</dbReference>
<dbReference type="GO" id="GO:0004751">
    <property type="term" value="F:ribose-5-phosphate isomerase activity"/>
    <property type="evidence" value="ECO:0007669"/>
    <property type="project" value="TreeGrafter"/>
</dbReference>
<dbReference type="GO" id="GO:0019316">
    <property type="term" value="P:D-allose catabolic process"/>
    <property type="evidence" value="ECO:0007669"/>
    <property type="project" value="TreeGrafter"/>
</dbReference>
<dbReference type="GO" id="GO:0019388">
    <property type="term" value="P:galactose catabolic process"/>
    <property type="evidence" value="ECO:0007669"/>
    <property type="project" value="UniProtKB-UniPathway"/>
</dbReference>
<dbReference type="GO" id="GO:0019512">
    <property type="term" value="P:lactose catabolic process via tagatose-6-phosphate"/>
    <property type="evidence" value="ECO:0007669"/>
    <property type="project" value="UniProtKB-UniRule"/>
</dbReference>
<dbReference type="GO" id="GO:0009052">
    <property type="term" value="P:pentose-phosphate shunt, non-oxidative branch"/>
    <property type="evidence" value="ECO:0007669"/>
    <property type="project" value="TreeGrafter"/>
</dbReference>
<dbReference type="Gene3D" id="3.40.1400.10">
    <property type="entry name" value="Sugar-phosphate isomerase, RpiB/LacA/LacB"/>
    <property type="match status" value="1"/>
</dbReference>
<dbReference type="HAMAP" id="MF_01556">
    <property type="entry name" value="LacB"/>
    <property type="match status" value="1"/>
</dbReference>
<dbReference type="InterPro" id="IPR004784">
    <property type="entry name" value="LacB"/>
</dbReference>
<dbReference type="InterPro" id="IPR003500">
    <property type="entry name" value="RpiB_LacA_LacB"/>
</dbReference>
<dbReference type="InterPro" id="IPR036569">
    <property type="entry name" value="RpiB_LacA_LacB_sf"/>
</dbReference>
<dbReference type="NCBIfam" id="TIGR01119">
    <property type="entry name" value="lacB"/>
    <property type="match status" value="1"/>
</dbReference>
<dbReference type="NCBIfam" id="NF004051">
    <property type="entry name" value="PRK05571.1"/>
    <property type="match status" value="1"/>
</dbReference>
<dbReference type="NCBIfam" id="NF006381">
    <property type="entry name" value="PRK08622.1"/>
    <property type="match status" value="1"/>
</dbReference>
<dbReference type="NCBIfam" id="NF009258">
    <property type="entry name" value="PRK12615.1"/>
    <property type="match status" value="1"/>
</dbReference>
<dbReference type="NCBIfam" id="TIGR00689">
    <property type="entry name" value="rpiB_lacA_lacB"/>
    <property type="match status" value="1"/>
</dbReference>
<dbReference type="PANTHER" id="PTHR30345:SF0">
    <property type="entry name" value="DNA DAMAGE-REPAIR_TOLERATION PROTEIN DRT102"/>
    <property type="match status" value="1"/>
</dbReference>
<dbReference type="PANTHER" id="PTHR30345">
    <property type="entry name" value="RIBOSE-5-PHOSPHATE ISOMERASE B"/>
    <property type="match status" value="1"/>
</dbReference>
<dbReference type="Pfam" id="PF02502">
    <property type="entry name" value="LacAB_rpiB"/>
    <property type="match status" value="1"/>
</dbReference>
<dbReference type="PIRSF" id="PIRSF005384">
    <property type="entry name" value="RpiB_LacA_B"/>
    <property type="match status" value="1"/>
</dbReference>
<dbReference type="SUPFAM" id="SSF89623">
    <property type="entry name" value="Ribose/Galactose isomerase RpiB/AlsB"/>
    <property type="match status" value="1"/>
</dbReference>
<proteinExistence type="inferred from homology"/>
<keyword id="KW-0413">Isomerase</keyword>
<keyword id="KW-0423">Lactose metabolism</keyword>
<name>LACB1_STRP6</name>
<gene>
    <name evidence="1" type="primary">lacB1</name>
    <name type="ordered locus">M6_Spy1446</name>
</gene>